<proteinExistence type="inferred from homology"/>
<sequence>MFSSLYPLARASLFKMDAEDAHHLTLRALGAAGRTGLACALSARVPDAPRTVMGLTFRNPVGLAAGLDKDGAAIDGLAALGFGFIEVGTVTPRPQPGNPRPRMFRLPQAEALINRMGFNNHGVDQFVKNVQAARYRGILGLNIGKNADTPIERAAEDYLYCLERVYPFASYVTINISSPNTKNLRQLQGAGELDALLAALKDKQQRLADLHGKLVPLALKIAPDLDDEQVKEIGDTLLRHKIEAVIATNTTLSRAAVQGLPHADEAGGLSGRPVFDASNEVIRKLHAEVGNDVPIIGVGGIFSGEDARAKLAAGAALVQLYTGFIYRGPALVSECVKAIARERTA</sequence>
<reference key="1">
    <citation type="journal article" date="2009" name="J. Bacteriol.">
        <title>The genome of Burkholderia cenocepacia J2315, an epidemic pathogen of cystic fibrosis patients.</title>
        <authorList>
            <person name="Holden M.T."/>
            <person name="Seth-Smith H.M."/>
            <person name="Crossman L.C."/>
            <person name="Sebaihia M."/>
            <person name="Bentley S.D."/>
            <person name="Cerdeno-Tarraga A.M."/>
            <person name="Thomson N.R."/>
            <person name="Bason N."/>
            <person name="Quail M.A."/>
            <person name="Sharp S."/>
            <person name="Cherevach I."/>
            <person name="Churcher C."/>
            <person name="Goodhead I."/>
            <person name="Hauser H."/>
            <person name="Holroyd N."/>
            <person name="Mungall K."/>
            <person name="Scott P."/>
            <person name="Walker D."/>
            <person name="White B."/>
            <person name="Rose H."/>
            <person name="Iversen P."/>
            <person name="Mil-Homens D."/>
            <person name="Rocha E.P."/>
            <person name="Fialho A.M."/>
            <person name="Baldwin A."/>
            <person name="Dowson C."/>
            <person name="Barrell B.G."/>
            <person name="Govan J.R."/>
            <person name="Vandamme P."/>
            <person name="Hart C.A."/>
            <person name="Mahenthiralingam E."/>
            <person name="Parkhill J."/>
        </authorList>
    </citation>
    <scope>NUCLEOTIDE SEQUENCE [LARGE SCALE GENOMIC DNA]</scope>
    <source>
        <strain>ATCC BAA-245 / DSM 16553 / LMG 16656 / NCTC 13227 / J2315 / CF5610</strain>
    </source>
</reference>
<comment type="function">
    <text evidence="1">Catalyzes the conversion of dihydroorotate to orotate with quinone as electron acceptor.</text>
</comment>
<comment type="catalytic activity">
    <reaction evidence="1">
        <text>(S)-dihydroorotate + a quinone = orotate + a quinol</text>
        <dbReference type="Rhea" id="RHEA:30187"/>
        <dbReference type="ChEBI" id="CHEBI:24646"/>
        <dbReference type="ChEBI" id="CHEBI:30839"/>
        <dbReference type="ChEBI" id="CHEBI:30864"/>
        <dbReference type="ChEBI" id="CHEBI:132124"/>
        <dbReference type="EC" id="1.3.5.2"/>
    </reaction>
</comment>
<comment type="cofactor">
    <cofactor evidence="1">
        <name>FMN</name>
        <dbReference type="ChEBI" id="CHEBI:58210"/>
    </cofactor>
    <text evidence="1">Binds 1 FMN per subunit.</text>
</comment>
<comment type="pathway">
    <text evidence="1">Pyrimidine metabolism; UMP biosynthesis via de novo pathway; orotate from (S)-dihydroorotate (quinone route): step 1/1.</text>
</comment>
<comment type="subunit">
    <text evidence="1">Monomer.</text>
</comment>
<comment type="subcellular location">
    <subcellularLocation>
        <location evidence="1">Cell membrane</location>
        <topology evidence="1">Peripheral membrane protein</topology>
    </subcellularLocation>
</comment>
<comment type="similarity">
    <text evidence="1">Belongs to the dihydroorotate dehydrogenase family. Type 2 subfamily.</text>
</comment>
<keyword id="KW-1003">Cell membrane</keyword>
<keyword id="KW-0285">Flavoprotein</keyword>
<keyword id="KW-0288">FMN</keyword>
<keyword id="KW-0472">Membrane</keyword>
<keyword id="KW-0560">Oxidoreductase</keyword>
<keyword id="KW-0665">Pyrimidine biosynthesis</keyword>
<name>PYRD_BURCJ</name>
<evidence type="ECO:0000255" key="1">
    <source>
        <dbReference type="HAMAP-Rule" id="MF_00225"/>
    </source>
</evidence>
<feature type="chain" id="PRO_1000100252" description="Dihydroorotate dehydrogenase (quinone)">
    <location>
        <begin position="1"/>
        <end position="345"/>
    </location>
</feature>
<feature type="active site" description="Nucleophile" evidence="1">
    <location>
        <position position="178"/>
    </location>
</feature>
<feature type="binding site" evidence="1">
    <location>
        <begin position="65"/>
        <end position="69"/>
    </location>
    <ligand>
        <name>FMN</name>
        <dbReference type="ChEBI" id="CHEBI:58210"/>
    </ligand>
</feature>
<feature type="binding site" evidence="1">
    <location>
        <position position="69"/>
    </location>
    <ligand>
        <name>substrate</name>
    </ligand>
</feature>
<feature type="binding site" evidence="1">
    <location>
        <position position="89"/>
    </location>
    <ligand>
        <name>FMN</name>
        <dbReference type="ChEBI" id="CHEBI:58210"/>
    </ligand>
</feature>
<feature type="binding site" evidence="1">
    <location>
        <begin position="114"/>
        <end position="118"/>
    </location>
    <ligand>
        <name>substrate</name>
    </ligand>
</feature>
<feature type="binding site" evidence="1">
    <location>
        <position position="142"/>
    </location>
    <ligand>
        <name>FMN</name>
        <dbReference type="ChEBI" id="CHEBI:58210"/>
    </ligand>
</feature>
<feature type="binding site" evidence="1">
    <location>
        <position position="175"/>
    </location>
    <ligand>
        <name>FMN</name>
        <dbReference type="ChEBI" id="CHEBI:58210"/>
    </ligand>
</feature>
<feature type="binding site" evidence="1">
    <location>
        <position position="175"/>
    </location>
    <ligand>
        <name>substrate</name>
    </ligand>
</feature>
<feature type="binding site" evidence="1">
    <location>
        <position position="180"/>
    </location>
    <ligand>
        <name>substrate</name>
    </ligand>
</feature>
<feature type="binding site" evidence="1">
    <location>
        <position position="220"/>
    </location>
    <ligand>
        <name>FMN</name>
        <dbReference type="ChEBI" id="CHEBI:58210"/>
    </ligand>
</feature>
<feature type="binding site" evidence="1">
    <location>
        <position position="248"/>
    </location>
    <ligand>
        <name>FMN</name>
        <dbReference type="ChEBI" id="CHEBI:58210"/>
    </ligand>
</feature>
<feature type="binding site" evidence="1">
    <location>
        <begin position="249"/>
        <end position="250"/>
    </location>
    <ligand>
        <name>substrate</name>
    </ligand>
</feature>
<feature type="binding site" evidence="1">
    <location>
        <position position="271"/>
    </location>
    <ligand>
        <name>FMN</name>
        <dbReference type="ChEBI" id="CHEBI:58210"/>
    </ligand>
</feature>
<feature type="binding site" evidence="1">
    <location>
        <position position="300"/>
    </location>
    <ligand>
        <name>FMN</name>
        <dbReference type="ChEBI" id="CHEBI:58210"/>
    </ligand>
</feature>
<feature type="binding site" evidence="1">
    <location>
        <begin position="321"/>
        <end position="322"/>
    </location>
    <ligand>
        <name>FMN</name>
        <dbReference type="ChEBI" id="CHEBI:58210"/>
    </ligand>
</feature>
<dbReference type="EC" id="1.3.5.2" evidence="1"/>
<dbReference type="EMBL" id="AM747720">
    <property type="protein sequence ID" value="CAR51909.1"/>
    <property type="molecule type" value="Genomic_DNA"/>
</dbReference>
<dbReference type="RefSeq" id="WP_012492588.1">
    <property type="nucleotide sequence ID" value="NC_011000.1"/>
</dbReference>
<dbReference type="SMR" id="B4E8N4"/>
<dbReference type="KEGG" id="bcj:BCAL1611"/>
<dbReference type="eggNOG" id="COG0167">
    <property type="taxonomic scope" value="Bacteria"/>
</dbReference>
<dbReference type="HOGENOM" id="CLU_013640_2_0_4"/>
<dbReference type="BioCyc" id="BCEN216591:G1G1V-1786-MONOMER"/>
<dbReference type="UniPathway" id="UPA00070">
    <property type="reaction ID" value="UER00946"/>
</dbReference>
<dbReference type="Proteomes" id="UP000001035">
    <property type="component" value="Chromosome 1"/>
</dbReference>
<dbReference type="GO" id="GO:0005737">
    <property type="term" value="C:cytoplasm"/>
    <property type="evidence" value="ECO:0007669"/>
    <property type="project" value="InterPro"/>
</dbReference>
<dbReference type="GO" id="GO:0005886">
    <property type="term" value="C:plasma membrane"/>
    <property type="evidence" value="ECO:0007669"/>
    <property type="project" value="UniProtKB-SubCell"/>
</dbReference>
<dbReference type="GO" id="GO:0106430">
    <property type="term" value="F:dihydroorotate dehydrogenase (quinone) activity"/>
    <property type="evidence" value="ECO:0007669"/>
    <property type="project" value="UniProtKB-EC"/>
</dbReference>
<dbReference type="GO" id="GO:0006207">
    <property type="term" value="P:'de novo' pyrimidine nucleobase biosynthetic process"/>
    <property type="evidence" value="ECO:0007669"/>
    <property type="project" value="InterPro"/>
</dbReference>
<dbReference type="GO" id="GO:0044205">
    <property type="term" value="P:'de novo' UMP biosynthetic process"/>
    <property type="evidence" value="ECO:0007669"/>
    <property type="project" value="UniProtKB-UniRule"/>
</dbReference>
<dbReference type="CDD" id="cd04738">
    <property type="entry name" value="DHOD_2_like"/>
    <property type="match status" value="1"/>
</dbReference>
<dbReference type="FunFam" id="3.20.20.70:FF:000028">
    <property type="entry name" value="Dihydroorotate dehydrogenase (quinone)"/>
    <property type="match status" value="1"/>
</dbReference>
<dbReference type="Gene3D" id="3.20.20.70">
    <property type="entry name" value="Aldolase class I"/>
    <property type="match status" value="1"/>
</dbReference>
<dbReference type="HAMAP" id="MF_00225">
    <property type="entry name" value="DHO_dh_type2"/>
    <property type="match status" value="1"/>
</dbReference>
<dbReference type="InterPro" id="IPR013785">
    <property type="entry name" value="Aldolase_TIM"/>
</dbReference>
<dbReference type="InterPro" id="IPR050074">
    <property type="entry name" value="DHO_dehydrogenase"/>
</dbReference>
<dbReference type="InterPro" id="IPR012135">
    <property type="entry name" value="Dihydroorotate_DH_1_2"/>
</dbReference>
<dbReference type="InterPro" id="IPR005719">
    <property type="entry name" value="Dihydroorotate_DH_2"/>
</dbReference>
<dbReference type="InterPro" id="IPR005720">
    <property type="entry name" value="Dihydroorotate_DH_cat"/>
</dbReference>
<dbReference type="InterPro" id="IPR001295">
    <property type="entry name" value="Dihydroorotate_DH_CS"/>
</dbReference>
<dbReference type="NCBIfam" id="NF003644">
    <property type="entry name" value="PRK05286.1-1"/>
    <property type="match status" value="1"/>
</dbReference>
<dbReference type="NCBIfam" id="NF003645">
    <property type="entry name" value="PRK05286.1-2"/>
    <property type="match status" value="1"/>
</dbReference>
<dbReference type="NCBIfam" id="NF003646">
    <property type="entry name" value="PRK05286.1-4"/>
    <property type="match status" value="1"/>
</dbReference>
<dbReference type="NCBIfam" id="NF003652">
    <property type="entry name" value="PRK05286.2-5"/>
    <property type="match status" value="1"/>
</dbReference>
<dbReference type="NCBIfam" id="TIGR01036">
    <property type="entry name" value="pyrD_sub2"/>
    <property type="match status" value="1"/>
</dbReference>
<dbReference type="PANTHER" id="PTHR48109:SF4">
    <property type="entry name" value="DIHYDROOROTATE DEHYDROGENASE (QUINONE), MITOCHONDRIAL"/>
    <property type="match status" value="1"/>
</dbReference>
<dbReference type="PANTHER" id="PTHR48109">
    <property type="entry name" value="DIHYDROOROTATE DEHYDROGENASE (QUINONE), MITOCHONDRIAL-RELATED"/>
    <property type="match status" value="1"/>
</dbReference>
<dbReference type="Pfam" id="PF01180">
    <property type="entry name" value="DHO_dh"/>
    <property type="match status" value="1"/>
</dbReference>
<dbReference type="PIRSF" id="PIRSF000164">
    <property type="entry name" value="DHO_oxidase"/>
    <property type="match status" value="1"/>
</dbReference>
<dbReference type="SUPFAM" id="SSF51395">
    <property type="entry name" value="FMN-linked oxidoreductases"/>
    <property type="match status" value="1"/>
</dbReference>
<dbReference type="PROSITE" id="PS00911">
    <property type="entry name" value="DHODEHASE_1"/>
    <property type="match status" value="1"/>
</dbReference>
<dbReference type="PROSITE" id="PS00912">
    <property type="entry name" value="DHODEHASE_2"/>
    <property type="match status" value="1"/>
</dbReference>
<accession>B4E8N4</accession>
<gene>
    <name evidence="1" type="primary">pyrD</name>
    <name type="ordered locus">BceJ2315_15750</name>
    <name type="ORF">BCAL1611</name>
</gene>
<protein>
    <recommendedName>
        <fullName evidence="1">Dihydroorotate dehydrogenase (quinone)</fullName>
        <ecNumber evidence="1">1.3.5.2</ecNumber>
    </recommendedName>
    <alternativeName>
        <fullName evidence="1">DHOdehase</fullName>
        <shortName evidence="1">DHOD</shortName>
        <shortName evidence="1">DHODase</shortName>
    </alternativeName>
    <alternativeName>
        <fullName evidence="1">Dihydroorotate oxidase</fullName>
    </alternativeName>
</protein>
<organism>
    <name type="scientific">Burkholderia cenocepacia (strain ATCC BAA-245 / DSM 16553 / LMG 16656 / NCTC 13227 / J2315 / CF5610)</name>
    <name type="common">Burkholderia cepacia (strain J2315)</name>
    <dbReference type="NCBI Taxonomy" id="216591"/>
    <lineage>
        <taxon>Bacteria</taxon>
        <taxon>Pseudomonadati</taxon>
        <taxon>Pseudomonadota</taxon>
        <taxon>Betaproteobacteria</taxon>
        <taxon>Burkholderiales</taxon>
        <taxon>Burkholderiaceae</taxon>
        <taxon>Burkholderia</taxon>
        <taxon>Burkholderia cepacia complex</taxon>
    </lineage>
</organism>